<dbReference type="EC" id="2.7.7.19"/>
<dbReference type="EMBL" id="U60315">
    <property type="protein sequence ID" value="AAC55159.1"/>
    <property type="molecule type" value="Genomic_DNA"/>
</dbReference>
<dbReference type="PIR" id="T30633">
    <property type="entry name" value="T30633"/>
</dbReference>
<dbReference type="RefSeq" id="NP_043982.1">
    <property type="nucleotide sequence ID" value="NC_001731.1"/>
</dbReference>
<dbReference type="SMR" id="Q98199"/>
<dbReference type="GeneID" id="1487052"/>
<dbReference type="KEGG" id="vg:1487052"/>
<dbReference type="OrthoDB" id="3428at10239"/>
<dbReference type="Proteomes" id="UP000000869">
    <property type="component" value="Genome"/>
</dbReference>
<dbReference type="GO" id="GO:0005524">
    <property type="term" value="F:ATP binding"/>
    <property type="evidence" value="ECO:0007669"/>
    <property type="project" value="UniProtKB-KW"/>
</dbReference>
<dbReference type="GO" id="GO:1990817">
    <property type="term" value="F:poly(A) RNA polymerase activity"/>
    <property type="evidence" value="ECO:0007669"/>
    <property type="project" value="UniProtKB-EC"/>
</dbReference>
<dbReference type="GO" id="GO:0006397">
    <property type="term" value="P:mRNA processing"/>
    <property type="evidence" value="ECO:0007669"/>
    <property type="project" value="UniProtKB-KW"/>
</dbReference>
<dbReference type="CDD" id="cd20919">
    <property type="entry name" value="polyA_pol_Pox"/>
    <property type="match status" value="1"/>
</dbReference>
<dbReference type="Gene3D" id="1.20.1270.320">
    <property type="entry name" value="Poxvirus poly(A) polymerase, N domain"/>
    <property type="match status" value="1"/>
</dbReference>
<dbReference type="Gene3D" id="3.30.460.60">
    <property type="entry name" value="Poxvirus poly(A) polymerase, nucleotidyltransferase domain"/>
    <property type="match status" value="1"/>
</dbReference>
<dbReference type="InterPro" id="IPR004976">
    <property type="entry name" value="PolyA_pol_cat_Poxvir"/>
</dbReference>
<dbReference type="InterPro" id="IPR037265">
    <property type="entry name" value="PolyA_pol_cat_sf"/>
</dbReference>
<dbReference type="InterPro" id="IPR024231">
    <property type="entry name" value="PolyA_pol_nucTrfase_Poxvir"/>
</dbReference>
<dbReference type="InterPro" id="IPR038419">
    <property type="entry name" value="PolyA_pol_nucTrfase_sf_Poxvir"/>
</dbReference>
<dbReference type="InterPro" id="IPR024397">
    <property type="entry name" value="Poxvirus_polyA_pol_cat_C"/>
</dbReference>
<dbReference type="InterPro" id="IPR024398">
    <property type="entry name" value="Poxvirus_polyA_pol_cat_N"/>
</dbReference>
<dbReference type="InterPro" id="IPR038337">
    <property type="entry name" value="Poxvirus_polyA_pol_cat_N_sf"/>
</dbReference>
<dbReference type="Pfam" id="PF03296">
    <property type="entry name" value="Pox_polyA_pol"/>
    <property type="match status" value="1"/>
</dbReference>
<dbReference type="Pfam" id="PF12629">
    <property type="entry name" value="Pox_polyA_pol_C"/>
    <property type="match status" value="1"/>
</dbReference>
<dbReference type="Pfam" id="PF12630">
    <property type="entry name" value="Pox_polyA_pol_N"/>
    <property type="match status" value="1"/>
</dbReference>
<dbReference type="PIRSF" id="PIRSF015693">
    <property type="entry name" value="VAC-48L_nuct"/>
    <property type="match status" value="1"/>
</dbReference>
<dbReference type="SUPFAM" id="SSF160957">
    <property type="entry name" value="Poly(A) polymerase catalytic subunit-like"/>
    <property type="match status" value="1"/>
</dbReference>
<organism>
    <name type="scientific">Molluscum contagiosum virus subtype 1</name>
    <name type="common">MOCV</name>
    <name type="synonym">MCVI</name>
    <dbReference type="NCBI Taxonomy" id="10280"/>
    <lineage>
        <taxon>Viruses</taxon>
        <taxon>Varidnaviria</taxon>
        <taxon>Bamfordvirae</taxon>
        <taxon>Nucleocytoviricota</taxon>
        <taxon>Pokkesviricetes</taxon>
        <taxon>Chitovirales</taxon>
        <taxon>Poxviridae</taxon>
        <taxon>Chordopoxvirinae</taxon>
        <taxon>Molluscipoxvirus</taxon>
        <taxon>Molluscum contagiosum virus</taxon>
    </lineage>
</organism>
<proteinExistence type="inferred from homology"/>
<protein>
    <recommendedName>
        <fullName>Poly(A) polymerase catalytic subunit</fullName>
        <ecNumber>2.7.7.19</ecNumber>
    </recommendedName>
    <alternativeName>
        <fullName>Poly(A) polymerase large subunit</fullName>
        <shortName>PAP-L</shortName>
    </alternativeName>
</protein>
<organismHost>
    <name type="scientific">Homo sapiens</name>
    <name type="common">Human</name>
    <dbReference type="NCBI Taxonomy" id="9606"/>
</organismHost>
<gene>
    <name type="primary">PAPL</name>
    <name type="ordered locus">MC031L</name>
</gene>
<evidence type="ECO:0000250" key="1"/>
<evidence type="ECO:0000305" key="2"/>
<sequence>MNGAQFELLREYLGRPPTLNQYFIFKPQARAIQRIMRFDTDVFFALIKKNKKRFFARIGGSASEINARVLSYFVKQRATTKVGRILSIIELQSVLVNSYTEIMGVLTLPAPPVYNSVVRLHYCSMERLAEEVLWSYNVAFRSGKVMGRHCVSNLVVHVNKLMSEYLRRHNRTAICYGSYSLHLLNSRIEYGDIDILQTNARLFLINLAFLIYFITGRNVLLLKVPYLKSYIVMQDEEGRHIIDSFNIRQGTMQNVPKVLVDNIYIIDPVVQLMNTLKMLSQIDRLEDLGERMAKMRLRLATLLEYARYHHCVSFGGGARLRLHMRLDAGARIVLVDTRCYGLGYRECRCYLDEARLLQDISKLNADAAVVDFEAVSNSVFLIHQGIMYTYFSNTVLLRSEDAIHDVSERAVCAHITLYHLLVGCNYQELLADLLNSLVSREKCPVVGVVARDKKVGRHGVIDIEKDVITH</sequence>
<name>PAP1_MCV1</name>
<accession>Q98199</accession>
<feature type="chain" id="PRO_0000308935" description="Poly(A) polymerase catalytic subunit">
    <location>
        <begin position="1"/>
        <end position="470"/>
    </location>
</feature>
<feature type="active site" evidence="1">
    <location>
        <position position="192"/>
    </location>
</feature>
<feature type="active site" evidence="1">
    <location>
        <position position="194"/>
    </location>
</feature>
<reference key="1">
    <citation type="journal article" date="1996" name="Science">
        <title>Genome sequence of a human tumorigenic poxvirus: prediction of specific host response-evasion genes.</title>
        <authorList>
            <person name="Senkevich T.G."/>
            <person name="Bugert J.J."/>
            <person name="Sisler J.R."/>
            <person name="Koonin E.V."/>
            <person name="Darai G."/>
            <person name="Moss B."/>
        </authorList>
    </citation>
    <scope>NUCLEOTIDE SEQUENCE [LARGE SCALE GENOMIC DNA]</scope>
</reference>
<keyword id="KW-0067">ATP-binding</keyword>
<keyword id="KW-0507">mRNA processing</keyword>
<keyword id="KW-0547">Nucleotide-binding</keyword>
<keyword id="KW-1185">Reference proteome</keyword>
<keyword id="KW-0804">Transcription</keyword>
<keyword id="KW-0808">Transferase</keyword>
<comment type="function">
    <text>Polymerase that creates the 3'-poly(A) tail of mRNA's.</text>
</comment>
<comment type="catalytic activity">
    <reaction>
        <text>RNA(n) + ATP = RNA(n)-3'-adenine ribonucleotide + diphosphate</text>
        <dbReference type="Rhea" id="RHEA:11332"/>
        <dbReference type="Rhea" id="RHEA-COMP:14527"/>
        <dbReference type="Rhea" id="RHEA-COMP:17347"/>
        <dbReference type="ChEBI" id="CHEBI:30616"/>
        <dbReference type="ChEBI" id="CHEBI:33019"/>
        <dbReference type="ChEBI" id="CHEBI:140395"/>
        <dbReference type="ChEBI" id="CHEBI:173115"/>
        <dbReference type="EC" id="2.7.7.19"/>
    </reaction>
</comment>
<comment type="subunit">
    <text evidence="1">Heterodimer of a large (catalytic) subunit and a small (regulatory) subunit.</text>
</comment>
<comment type="similarity">
    <text evidence="2">Belongs to the poxviridae poly(A) polymerase catalytic subunit family.</text>
</comment>